<organism>
    <name type="scientific">Ectopseudomonas mendocina (strain ymp)</name>
    <name type="common">Pseudomonas mendocina</name>
    <dbReference type="NCBI Taxonomy" id="399739"/>
    <lineage>
        <taxon>Bacteria</taxon>
        <taxon>Pseudomonadati</taxon>
        <taxon>Pseudomonadota</taxon>
        <taxon>Gammaproteobacteria</taxon>
        <taxon>Pseudomonadales</taxon>
        <taxon>Pseudomonadaceae</taxon>
        <taxon>Ectopseudomonas</taxon>
    </lineage>
</organism>
<reference key="1">
    <citation type="submission" date="2007-04" db="EMBL/GenBank/DDBJ databases">
        <title>Complete sequence of Pseudomonas mendocina ymp.</title>
        <authorList>
            <consortium name="US DOE Joint Genome Institute"/>
            <person name="Copeland A."/>
            <person name="Lucas S."/>
            <person name="Lapidus A."/>
            <person name="Barry K."/>
            <person name="Glavina del Rio T."/>
            <person name="Dalin E."/>
            <person name="Tice H."/>
            <person name="Pitluck S."/>
            <person name="Kiss H."/>
            <person name="Brettin T."/>
            <person name="Detter J.C."/>
            <person name="Bruce D."/>
            <person name="Han C."/>
            <person name="Schmutz J."/>
            <person name="Larimer F."/>
            <person name="Land M."/>
            <person name="Hauser L."/>
            <person name="Kyrpides N."/>
            <person name="Mikhailova N."/>
            <person name="Hersman L."/>
            <person name="Dubois J."/>
            <person name="Maurice P."/>
            <person name="Richardson P."/>
        </authorList>
    </citation>
    <scope>NUCLEOTIDE SEQUENCE [LARGE SCALE GENOMIC DNA]</scope>
    <source>
        <strain>ymp</strain>
    </source>
</reference>
<dbReference type="EC" id="2.1.1.177" evidence="1"/>
<dbReference type="EMBL" id="CP000680">
    <property type="protein sequence ID" value="ABP86547.1"/>
    <property type="molecule type" value="Genomic_DNA"/>
</dbReference>
<dbReference type="SMR" id="A4XYY1"/>
<dbReference type="STRING" id="399739.Pmen_3799"/>
<dbReference type="KEGG" id="pmy:Pmen_3799"/>
<dbReference type="eggNOG" id="COG1576">
    <property type="taxonomic scope" value="Bacteria"/>
</dbReference>
<dbReference type="HOGENOM" id="CLU_100552_1_0_6"/>
<dbReference type="OrthoDB" id="9806643at2"/>
<dbReference type="GO" id="GO:0005737">
    <property type="term" value="C:cytoplasm"/>
    <property type="evidence" value="ECO:0007669"/>
    <property type="project" value="UniProtKB-SubCell"/>
</dbReference>
<dbReference type="GO" id="GO:0070038">
    <property type="term" value="F:rRNA (pseudouridine-N3-)-methyltransferase activity"/>
    <property type="evidence" value="ECO:0007669"/>
    <property type="project" value="UniProtKB-UniRule"/>
</dbReference>
<dbReference type="CDD" id="cd18081">
    <property type="entry name" value="RlmH-like"/>
    <property type="match status" value="1"/>
</dbReference>
<dbReference type="Gene3D" id="3.40.1280.10">
    <property type="match status" value="1"/>
</dbReference>
<dbReference type="HAMAP" id="MF_00658">
    <property type="entry name" value="23SrRNA_methyltr_H"/>
    <property type="match status" value="1"/>
</dbReference>
<dbReference type="InterPro" id="IPR029028">
    <property type="entry name" value="Alpha/beta_knot_MTases"/>
</dbReference>
<dbReference type="InterPro" id="IPR003742">
    <property type="entry name" value="RlmH-like"/>
</dbReference>
<dbReference type="InterPro" id="IPR029026">
    <property type="entry name" value="tRNA_m1G_MTases_N"/>
</dbReference>
<dbReference type="NCBIfam" id="NF000986">
    <property type="entry name" value="PRK00103.1-4"/>
    <property type="match status" value="1"/>
</dbReference>
<dbReference type="NCBIfam" id="TIGR00246">
    <property type="entry name" value="tRNA_RlmH_YbeA"/>
    <property type="match status" value="1"/>
</dbReference>
<dbReference type="PANTHER" id="PTHR33603">
    <property type="entry name" value="METHYLTRANSFERASE"/>
    <property type="match status" value="1"/>
</dbReference>
<dbReference type="PANTHER" id="PTHR33603:SF1">
    <property type="entry name" value="RIBOSOMAL RNA LARGE SUBUNIT METHYLTRANSFERASE H"/>
    <property type="match status" value="1"/>
</dbReference>
<dbReference type="Pfam" id="PF02590">
    <property type="entry name" value="SPOUT_MTase"/>
    <property type="match status" value="1"/>
</dbReference>
<dbReference type="PIRSF" id="PIRSF004505">
    <property type="entry name" value="MT_bac"/>
    <property type="match status" value="1"/>
</dbReference>
<dbReference type="SUPFAM" id="SSF75217">
    <property type="entry name" value="alpha/beta knot"/>
    <property type="match status" value="1"/>
</dbReference>
<evidence type="ECO:0000255" key="1">
    <source>
        <dbReference type="HAMAP-Rule" id="MF_00658"/>
    </source>
</evidence>
<gene>
    <name evidence="1" type="primary">rlmH</name>
    <name type="ordered locus">Pmen_3799</name>
</gene>
<comment type="function">
    <text evidence="1">Specifically methylates the pseudouridine at position 1915 (m3Psi1915) in 23S rRNA.</text>
</comment>
<comment type="catalytic activity">
    <reaction evidence="1">
        <text>pseudouridine(1915) in 23S rRNA + S-adenosyl-L-methionine = N(3)-methylpseudouridine(1915) in 23S rRNA + S-adenosyl-L-homocysteine + H(+)</text>
        <dbReference type="Rhea" id="RHEA:42752"/>
        <dbReference type="Rhea" id="RHEA-COMP:10221"/>
        <dbReference type="Rhea" id="RHEA-COMP:10222"/>
        <dbReference type="ChEBI" id="CHEBI:15378"/>
        <dbReference type="ChEBI" id="CHEBI:57856"/>
        <dbReference type="ChEBI" id="CHEBI:59789"/>
        <dbReference type="ChEBI" id="CHEBI:65314"/>
        <dbReference type="ChEBI" id="CHEBI:74486"/>
        <dbReference type="EC" id="2.1.1.177"/>
    </reaction>
</comment>
<comment type="subunit">
    <text evidence="1">Homodimer.</text>
</comment>
<comment type="subcellular location">
    <subcellularLocation>
        <location evidence="1">Cytoplasm</location>
    </subcellularLocation>
</comment>
<comment type="similarity">
    <text evidence="1">Belongs to the RNA methyltransferase RlmH family.</text>
</comment>
<keyword id="KW-0963">Cytoplasm</keyword>
<keyword id="KW-0489">Methyltransferase</keyword>
<keyword id="KW-0698">rRNA processing</keyword>
<keyword id="KW-0949">S-adenosyl-L-methionine</keyword>
<keyword id="KW-0808">Transferase</keyword>
<proteinExistence type="inferred from homology"/>
<accession>A4XYY1</accession>
<protein>
    <recommendedName>
        <fullName evidence="1">Ribosomal RNA large subunit methyltransferase H</fullName>
        <ecNumber evidence="1">2.1.1.177</ecNumber>
    </recommendedName>
    <alternativeName>
        <fullName evidence="1">23S rRNA (pseudouridine1915-N3)-methyltransferase</fullName>
    </alternativeName>
    <alternativeName>
        <fullName evidence="1">23S rRNA m3Psi1915 methyltransferase</fullName>
    </alternativeName>
    <alternativeName>
        <fullName evidence="1">rRNA (pseudouridine-N3-)-methyltransferase RlmH</fullName>
    </alternativeName>
</protein>
<feature type="chain" id="PRO_1000061827" description="Ribosomal RNA large subunit methyltransferase H">
    <location>
        <begin position="1"/>
        <end position="155"/>
    </location>
</feature>
<feature type="binding site" evidence="1">
    <location>
        <position position="73"/>
    </location>
    <ligand>
        <name>S-adenosyl-L-methionine</name>
        <dbReference type="ChEBI" id="CHEBI:59789"/>
    </ligand>
</feature>
<feature type="binding site" evidence="1">
    <location>
        <position position="104"/>
    </location>
    <ligand>
        <name>S-adenosyl-L-methionine</name>
        <dbReference type="ChEBI" id="CHEBI:59789"/>
    </ligand>
</feature>
<feature type="binding site" evidence="1">
    <location>
        <begin position="123"/>
        <end position="128"/>
    </location>
    <ligand>
        <name>S-adenosyl-L-methionine</name>
        <dbReference type="ChEBI" id="CHEBI:59789"/>
    </ligand>
</feature>
<sequence>MRIKLIAVGSRMPRWVEEGWQEYVKRLPAELPLELVEIPLNTRGKNADVARLIRQEGEAMLSKVQPGERIVTLEVHGKPWSTEQLAAELERWRLDARNVNLMVGGPEGLAPEVCARSEQRWSLSPLTLPHPLVRILLGEQIYRAWTVLSGHPYHK</sequence>
<name>RLMH_ECTM1</name>